<geneLocation type="chloroplast"/>
<accession>Q32RK0</accession>
<reference key="1">
    <citation type="journal article" date="2005" name="BMC Biol.">
        <title>The complete chloroplast DNA sequences of the charophycean green algae Staurastrum and Zygnema reveal that the chloroplast genome underwent extensive changes during the evolution of the Zygnematales.</title>
        <authorList>
            <person name="Turmel M."/>
            <person name="Otis C."/>
            <person name="Lemieux C."/>
        </authorList>
    </citation>
    <scope>NUCLEOTIDE SEQUENCE [LARGE SCALE GENOMIC DNA]</scope>
</reference>
<name>NU6C_ZYGCR</name>
<keyword id="KW-0150">Chloroplast</keyword>
<keyword id="KW-0472">Membrane</keyword>
<keyword id="KW-0520">NAD</keyword>
<keyword id="KW-0521">NADP</keyword>
<keyword id="KW-0934">Plastid</keyword>
<keyword id="KW-0618">Plastoquinone</keyword>
<keyword id="KW-0874">Quinone</keyword>
<keyword id="KW-0793">Thylakoid</keyword>
<keyword id="KW-1278">Translocase</keyword>
<keyword id="KW-0812">Transmembrane</keyword>
<keyword id="KW-1133">Transmembrane helix</keyword>
<keyword id="KW-0813">Transport</keyword>
<comment type="function">
    <text evidence="1">NDH shuttles electrons from NAD(P)H:plastoquinone, via FMN and iron-sulfur (Fe-S) centers, to quinones in the photosynthetic chain and possibly in a chloroplast respiratory chain. The immediate electron acceptor for the enzyme in this species is believed to be plastoquinone. Couples the redox reaction to proton translocation, and thus conserves the redox energy in a proton gradient (By similarity).</text>
</comment>
<comment type="catalytic activity">
    <reaction>
        <text>a plastoquinone + NADH + (n+1) H(+)(in) = a plastoquinol + NAD(+) + n H(+)(out)</text>
        <dbReference type="Rhea" id="RHEA:42608"/>
        <dbReference type="Rhea" id="RHEA-COMP:9561"/>
        <dbReference type="Rhea" id="RHEA-COMP:9562"/>
        <dbReference type="ChEBI" id="CHEBI:15378"/>
        <dbReference type="ChEBI" id="CHEBI:17757"/>
        <dbReference type="ChEBI" id="CHEBI:57540"/>
        <dbReference type="ChEBI" id="CHEBI:57945"/>
        <dbReference type="ChEBI" id="CHEBI:62192"/>
    </reaction>
</comment>
<comment type="catalytic activity">
    <reaction>
        <text>a plastoquinone + NADPH + (n+1) H(+)(in) = a plastoquinol + NADP(+) + n H(+)(out)</text>
        <dbReference type="Rhea" id="RHEA:42612"/>
        <dbReference type="Rhea" id="RHEA-COMP:9561"/>
        <dbReference type="Rhea" id="RHEA-COMP:9562"/>
        <dbReference type="ChEBI" id="CHEBI:15378"/>
        <dbReference type="ChEBI" id="CHEBI:17757"/>
        <dbReference type="ChEBI" id="CHEBI:57783"/>
        <dbReference type="ChEBI" id="CHEBI:58349"/>
        <dbReference type="ChEBI" id="CHEBI:62192"/>
    </reaction>
</comment>
<comment type="subunit">
    <text evidence="1">NDH is composed of at least 16 different subunits, 5 of which are encoded in the nucleus.</text>
</comment>
<comment type="subcellular location">
    <subcellularLocation>
        <location evidence="1">Plastid</location>
        <location evidence="1">Chloroplast thylakoid membrane</location>
        <topology evidence="1">Multi-pass membrane protein</topology>
    </subcellularLocation>
</comment>
<comment type="similarity">
    <text evidence="3">Belongs to the complex I subunit 6 family.</text>
</comment>
<protein>
    <recommendedName>
        <fullName>NAD(P)H-quinone oxidoreductase subunit 6, chloroplastic</fullName>
        <ecNumber>7.1.1.-</ecNumber>
    </recommendedName>
    <alternativeName>
        <fullName>NAD(P)H dehydrogenase subunit 6</fullName>
    </alternativeName>
    <alternativeName>
        <fullName>NADH-plastoquinone oxidoreductase subunit 6</fullName>
    </alternativeName>
</protein>
<sequence length="181" mass="19723">MIPISESTNTLLFVVLEFAILVGALGVVLLSRVIYSALLLGFVFICVALLYLLLNADFLAAAQVLIYVGAVNVLIVFAIMLVSTPDDVKNKPKTTGEIISAFTFIALFVLLTIMIFTTSWDTHHNLATQDEVLLQPLMSNVQTIGFHLLTDLLFPFELLSLLLLVALVGAITIASKNKITE</sequence>
<evidence type="ECO:0000250" key="1"/>
<evidence type="ECO:0000255" key="2"/>
<evidence type="ECO:0000305" key="3"/>
<organism>
    <name type="scientific">Zygnema circumcarinatum</name>
    <name type="common">Green alga</name>
    <dbReference type="NCBI Taxonomy" id="35869"/>
    <lineage>
        <taxon>Eukaryota</taxon>
        <taxon>Viridiplantae</taxon>
        <taxon>Streptophyta</taxon>
        <taxon>Zygnematophyceae</taxon>
        <taxon>Zygnematophycidae</taxon>
        <taxon>Zygnematales</taxon>
        <taxon>Zygnemataceae</taxon>
        <taxon>Zygnema</taxon>
    </lineage>
</organism>
<gene>
    <name type="primary">ndhG</name>
</gene>
<feature type="chain" id="PRO_0000360296" description="NAD(P)H-quinone oxidoreductase subunit 6, chloroplastic">
    <location>
        <begin position="1"/>
        <end position="181"/>
    </location>
</feature>
<feature type="transmembrane region" description="Helical" evidence="2">
    <location>
        <begin position="10"/>
        <end position="30"/>
    </location>
</feature>
<feature type="transmembrane region" description="Helical" evidence="2">
    <location>
        <begin position="33"/>
        <end position="53"/>
    </location>
</feature>
<feature type="transmembrane region" description="Helical" evidence="2">
    <location>
        <begin position="62"/>
        <end position="82"/>
    </location>
</feature>
<feature type="transmembrane region" description="Helical" evidence="2">
    <location>
        <begin position="98"/>
        <end position="118"/>
    </location>
</feature>
<feature type="transmembrane region" description="Helical" evidence="2">
    <location>
        <begin position="153"/>
        <end position="173"/>
    </location>
</feature>
<dbReference type="EC" id="7.1.1.-"/>
<dbReference type="EMBL" id="AY958086">
    <property type="protein sequence ID" value="AAX45818.1"/>
    <property type="molecule type" value="Genomic_DNA"/>
</dbReference>
<dbReference type="RefSeq" id="YP_636526.1">
    <property type="nucleotide sequence ID" value="NC_008117.1"/>
</dbReference>
<dbReference type="SMR" id="Q32RK0"/>
<dbReference type="GeneID" id="4108138"/>
<dbReference type="GO" id="GO:0009535">
    <property type="term" value="C:chloroplast thylakoid membrane"/>
    <property type="evidence" value="ECO:0007669"/>
    <property type="project" value="UniProtKB-SubCell"/>
</dbReference>
<dbReference type="GO" id="GO:0008137">
    <property type="term" value="F:NADH dehydrogenase (ubiquinone) activity"/>
    <property type="evidence" value="ECO:0007669"/>
    <property type="project" value="InterPro"/>
</dbReference>
<dbReference type="GO" id="GO:0048038">
    <property type="term" value="F:quinone binding"/>
    <property type="evidence" value="ECO:0007669"/>
    <property type="project" value="UniProtKB-KW"/>
</dbReference>
<dbReference type="FunFam" id="1.20.120.1200:FF:000002">
    <property type="entry name" value="NAD(P)H-quinone oxidoreductase subunit 6, chloroplastic"/>
    <property type="match status" value="1"/>
</dbReference>
<dbReference type="Gene3D" id="1.20.120.1200">
    <property type="entry name" value="NADH-ubiquinone/plastoquinone oxidoreductase chain 6, subunit NuoJ"/>
    <property type="match status" value="1"/>
</dbReference>
<dbReference type="InterPro" id="IPR001457">
    <property type="entry name" value="NADH_UbQ/plastoQ_OxRdtase_su6"/>
</dbReference>
<dbReference type="InterPro" id="IPR042106">
    <property type="entry name" value="Nuo/plastoQ_OxRdtase_6_NuoJ"/>
</dbReference>
<dbReference type="NCBIfam" id="NF005163">
    <property type="entry name" value="PRK06638.1-3"/>
    <property type="match status" value="1"/>
</dbReference>
<dbReference type="PANTHER" id="PTHR33269">
    <property type="entry name" value="NADH-UBIQUINONE OXIDOREDUCTASE CHAIN 6"/>
    <property type="match status" value="1"/>
</dbReference>
<dbReference type="PANTHER" id="PTHR33269:SF17">
    <property type="entry name" value="NADH-UBIQUINONE OXIDOREDUCTASE CHAIN 6"/>
    <property type="match status" value="1"/>
</dbReference>
<dbReference type="Pfam" id="PF00499">
    <property type="entry name" value="Oxidored_q3"/>
    <property type="match status" value="1"/>
</dbReference>
<proteinExistence type="inferred from homology"/>